<proteinExistence type="inferred from homology"/>
<comment type="function">
    <text evidence="1">Catalyzes the conversion of allantoin (5-ureidohydantoin) to allantoic acid by hydrolytic cleavage of the five-member hydantoin ring.</text>
</comment>
<comment type="catalytic activity">
    <reaction evidence="1">
        <text>(S)-allantoin + H2O = allantoate + H(+)</text>
        <dbReference type="Rhea" id="RHEA:17029"/>
        <dbReference type="ChEBI" id="CHEBI:15377"/>
        <dbReference type="ChEBI" id="CHEBI:15378"/>
        <dbReference type="ChEBI" id="CHEBI:15678"/>
        <dbReference type="ChEBI" id="CHEBI:17536"/>
        <dbReference type="EC" id="3.5.2.5"/>
    </reaction>
</comment>
<comment type="cofactor">
    <cofactor evidence="1">
        <name>Zn(2+)</name>
        <dbReference type="ChEBI" id="CHEBI:29105"/>
    </cofactor>
    <text evidence="1">Binds 2 Zn(2+) ions per subunit.</text>
</comment>
<comment type="pathway">
    <text evidence="1">Nitrogen metabolism; (S)-allantoin degradation; allantoate from (S)-allantoin: step 1/1.</text>
</comment>
<comment type="subunit">
    <text evidence="1">Homotetramer.</text>
</comment>
<comment type="PTM">
    <text evidence="1">Carboxylation allows a single lysine to coordinate two zinc ions.</text>
</comment>
<comment type="similarity">
    <text evidence="1">Belongs to the metallo-dependent hydrolases superfamily. Allantoinase family.</text>
</comment>
<organism>
    <name type="scientific">Salmonella paratyphi A (strain AKU_12601)</name>
    <dbReference type="NCBI Taxonomy" id="554290"/>
    <lineage>
        <taxon>Bacteria</taxon>
        <taxon>Pseudomonadati</taxon>
        <taxon>Pseudomonadota</taxon>
        <taxon>Gammaproteobacteria</taxon>
        <taxon>Enterobacterales</taxon>
        <taxon>Enterobacteriaceae</taxon>
        <taxon>Salmonella</taxon>
    </lineage>
</organism>
<gene>
    <name evidence="1" type="primary">allB</name>
    <name type="ordered locus">SSPA2045</name>
</gene>
<reference key="1">
    <citation type="journal article" date="2009" name="BMC Genomics">
        <title>Pseudogene accumulation in the evolutionary histories of Salmonella enterica serovars Paratyphi A and Typhi.</title>
        <authorList>
            <person name="Holt K.E."/>
            <person name="Thomson N.R."/>
            <person name="Wain J."/>
            <person name="Langridge G.C."/>
            <person name="Hasan R."/>
            <person name="Bhutta Z.A."/>
            <person name="Quail M.A."/>
            <person name="Norbertczak H."/>
            <person name="Walker D."/>
            <person name="Simmonds M."/>
            <person name="White B."/>
            <person name="Bason N."/>
            <person name="Mungall K."/>
            <person name="Dougan G."/>
            <person name="Parkhill J."/>
        </authorList>
    </citation>
    <scope>NUCLEOTIDE SEQUENCE [LARGE SCALE GENOMIC DNA]</scope>
    <source>
        <strain>AKU_12601</strain>
    </source>
</reference>
<name>ALLB_SALPK</name>
<evidence type="ECO:0000255" key="1">
    <source>
        <dbReference type="HAMAP-Rule" id="MF_01645"/>
    </source>
</evidence>
<accession>B5BD11</accession>
<keyword id="KW-0378">Hydrolase</keyword>
<keyword id="KW-0479">Metal-binding</keyword>
<keyword id="KW-0659">Purine metabolism</keyword>
<keyword id="KW-0862">Zinc</keyword>
<feature type="chain" id="PRO_1000186932" description="Allantoinase">
    <location>
        <begin position="1"/>
        <end position="453"/>
    </location>
</feature>
<feature type="binding site" evidence="1">
    <location>
        <position position="59"/>
    </location>
    <ligand>
        <name>Zn(2+)</name>
        <dbReference type="ChEBI" id="CHEBI:29105"/>
        <label>1</label>
    </ligand>
</feature>
<feature type="binding site" evidence="1">
    <location>
        <position position="61"/>
    </location>
    <ligand>
        <name>Zn(2+)</name>
        <dbReference type="ChEBI" id="CHEBI:29105"/>
        <label>1</label>
    </ligand>
</feature>
<feature type="binding site" description="via carbamate group" evidence="1">
    <location>
        <position position="146"/>
    </location>
    <ligand>
        <name>Zn(2+)</name>
        <dbReference type="ChEBI" id="CHEBI:29105"/>
        <label>1</label>
    </ligand>
</feature>
<feature type="binding site" description="via carbamate group" evidence="1">
    <location>
        <position position="146"/>
    </location>
    <ligand>
        <name>Zn(2+)</name>
        <dbReference type="ChEBI" id="CHEBI:29105"/>
        <label>2</label>
    </ligand>
</feature>
<feature type="binding site" evidence="1">
    <location>
        <position position="186"/>
    </location>
    <ligand>
        <name>Zn(2+)</name>
        <dbReference type="ChEBI" id="CHEBI:29105"/>
        <label>2</label>
    </ligand>
</feature>
<feature type="binding site" evidence="1">
    <location>
        <position position="242"/>
    </location>
    <ligand>
        <name>Zn(2+)</name>
        <dbReference type="ChEBI" id="CHEBI:29105"/>
        <label>2</label>
    </ligand>
</feature>
<feature type="binding site" evidence="1">
    <location>
        <position position="315"/>
    </location>
    <ligand>
        <name>Zn(2+)</name>
        <dbReference type="ChEBI" id="CHEBI:29105"/>
        <label>1</label>
    </ligand>
</feature>
<feature type="modified residue" description="N6-carboxylysine" evidence="1">
    <location>
        <position position="146"/>
    </location>
</feature>
<protein>
    <recommendedName>
        <fullName evidence="1">Allantoinase</fullName>
        <ecNumber evidence="1">3.5.2.5</ecNumber>
    </recommendedName>
    <alternativeName>
        <fullName evidence="1">Allantoin-utilizing enzyme</fullName>
    </alternativeName>
</protein>
<dbReference type="EC" id="3.5.2.5" evidence="1"/>
<dbReference type="EMBL" id="FM200053">
    <property type="protein sequence ID" value="CAR60253.1"/>
    <property type="molecule type" value="Genomic_DNA"/>
</dbReference>
<dbReference type="RefSeq" id="WP_000006865.1">
    <property type="nucleotide sequence ID" value="NC_011147.1"/>
</dbReference>
<dbReference type="SMR" id="B5BD11"/>
<dbReference type="KEGG" id="sek:SSPA2045"/>
<dbReference type="HOGENOM" id="CLU_015572_4_2_6"/>
<dbReference type="UniPathway" id="UPA00395">
    <property type="reaction ID" value="UER00653"/>
</dbReference>
<dbReference type="Proteomes" id="UP000001869">
    <property type="component" value="Chromosome"/>
</dbReference>
<dbReference type="GO" id="GO:0005737">
    <property type="term" value="C:cytoplasm"/>
    <property type="evidence" value="ECO:0007669"/>
    <property type="project" value="TreeGrafter"/>
</dbReference>
<dbReference type="GO" id="GO:0004038">
    <property type="term" value="F:allantoinase activity"/>
    <property type="evidence" value="ECO:0007669"/>
    <property type="project" value="UniProtKB-UniRule"/>
</dbReference>
<dbReference type="GO" id="GO:0050897">
    <property type="term" value="F:cobalt ion binding"/>
    <property type="evidence" value="ECO:0007669"/>
    <property type="project" value="InterPro"/>
</dbReference>
<dbReference type="GO" id="GO:0008270">
    <property type="term" value="F:zinc ion binding"/>
    <property type="evidence" value="ECO:0007669"/>
    <property type="project" value="InterPro"/>
</dbReference>
<dbReference type="GO" id="GO:0000256">
    <property type="term" value="P:allantoin catabolic process"/>
    <property type="evidence" value="ECO:0007669"/>
    <property type="project" value="UniProtKB-UniRule"/>
</dbReference>
<dbReference type="GO" id="GO:0006145">
    <property type="term" value="P:purine nucleobase catabolic process"/>
    <property type="evidence" value="ECO:0007669"/>
    <property type="project" value="TreeGrafter"/>
</dbReference>
<dbReference type="CDD" id="cd01315">
    <property type="entry name" value="L-HYD_ALN"/>
    <property type="match status" value="1"/>
</dbReference>
<dbReference type="FunFam" id="3.20.20.140:FF:000013">
    <property type="entry name" value="Allantoinase"/>
    <property type="match status" value="1"/>
</dbReference>
<dbReference type="Gene3D" id="3.20.20.140">
    <property type="entry name" value="Metal-dependent hydrolases"/>
    <property type="match status" value="1"/>
</dbReference>
<dbReference type="HAMAP" id="MF_01645">
    <property type="entry name" value="Hydantoinase"/>
    <property type="match status" value="1"/>
</dbReference>
<dbReference type="InterPro" id="IPR017593">
    <property type="entry name" value="Allantoinase"/>
</dbReference>
<dbReference type="InterPro" id="IPR047604">
    <property type="entry name" value="Allantoinase_bact"/>
</dbReference>
<dbReference type="InterPro" id="IPR006680">
    <property type="entry name" value="Amidohydro-rel"/>
</dbReference>
<dbReference type="InterPro" id="IPR050138">
    <property type="entry name" value="DHOase/Allantoinase_Hydrolase"/>
</dbReference>
<dbReference type="InterPro" id="IPR011059">
    <property type="entry name" value="Metal-dep_hydrolase_composite"/>
</dbReference>
<dbReference type="InterPro" id="IPR032466">
    <property type="entry name" value="Metal_Hydrolase"/>
</dbReference>
<dbReference type="NCBIfam" id="TIGR03178">
    <property type="entry name" value="allantoinase"/>
    <property type="match status" value="1"/>
</dbReference>
<dbReference type="NCBIfam" id="NF005960">
    <property type="entry name" value="PRK08044.1"/>
    <property type="match status" value="1"/>
</dbReference>
<dbReference type="PANTHER" id="PTHR43668">
    <property type="entry name" value="ALLANTOINASE"/>
    <property type="match status" value="1"/>
</dbReference>
<dbReference type="PANTHER" id="PTHR43668:SF4">
    <property type="entry name" value="ALLANTOINASE"/>
    <property type="match status" value="1"/>
</dbReference>
<dbReference type="Pfam" id="PF01979">
    <property type="entry name" value="Amidohydro_1"/>
    <property type="match status" value="1"/>
</dbReference>
<dbReference type="SUPFAM" id="SSF51338">
    <property type="entry name" value="Composite domain of metallo-dependent hydrolases"/>
    <property type="match status" value="1"/>
</dbReference>
<dbReference type="SUPFAM" id="SSF51556">
    <property type="entry name" value="Metallo-dependent hydrolases"/>
    <property type="match status" value="1"/>
</dbReference>
<sequence length="453" mass="49887">MSFDLIIKNGTVILENEARVIDIAVQGGKIAAIGENLGEAKNVLDATGLIVSPGMVDAHTHISEPGRTHWEGYETGTRAAAKGGITTMIEMPLNQLPATVDRETIELKFDAAKGKLTIDAAQLGGLVSYNLDRLHELDEVGVVGFKCFVATCGDRGIDNDFRDVNDWQFYKGAQKLGEMDQTVLVHCENALICDELGEEAKREGRVTAHDYVASRPVFTEVEAIRRVLYLAKAAGCRLHVCHISSPEGVEEVTRARQEGQDVTCESCPHYFVLDTDQFEEIGTLAKCSPPIRDQENQKGMWEKLFNGEIDCLVSDHSPCPPEMKAGNIMQAWGGIAGLQNCMDVMFDEAVQKRGMSLPMFGKLMATNAADIFGLKHKGRIAPGKDADLVFIQPDSSYVLKNEDLEYRHKVSPYVGRTIGARITKTILRGDVIYDIEHGFPVPPKGQFILKHQQ</sequence>